<comment type="function">
    <text evidence="1">F(1)F(0) ATP synthase produces ATP from ADP in the presence of a proton or sodium gradient. F-type ATPases consist of two structural domains, F(1) containing the extramembraneous catalytic core and F(0) containing the membrane proton channel, linked together by a central stalk and a peripheral stalk. During catalysis, ATP synthesis in the catalytic domain of F(1) is coupled via a rotary mechanism of the central stalk subunits to proton translocation.</text>
</comment>
<comment type="function">
    <text evidence="1">This protein is part of the stalk that links CF(0) to CF(1). It either transmits conformational changes from CF(0) to CF(1) or is implicated in proton conduction.</text>
</comment>
<comment type="subunit">
    <text evidence="1">F-type ATPases have 2 components, F(1) - the catalytic core - and F(0) - the membrane proton channel. F(1) has five subunits: alpha(3), beta(3), gamma(1), delta(1), epsilon(1). F(0) has three main subunits: a(1), b(2) and c(10-14). The alpha and beta chains form an alternating ring which encloses part of the gamma chain. F(1) is attached to F(0) by a central stalk formed by the gamma and epsilon chains, while a peripheral stalk is formed by the delta and b chains.</text>
</comment>
<comment type="subcellular location">
    <subcellularLocation>
        <location evidence="1">Cell inner membrane</location>
        <topology evidence="1">Peripheral membrane protein</topology>
    </subcellularLocation>
</comment>
<comment type="similarity">
    <text evidence="1">Belongs to the ATPase delta chain family.</text>
</comment>
<organism>
    <name type="scientific">Salmonella typhi</name>
    <dbReference type="NCBI Taxonomy" id="90370"/>
    <lineage>
        <taxon>Bacteria</taxon>
        <taxon>Pseudomonadati</taxon>
        <taxon>Pseudomonadota</taxon>
        <taxon>Gammaproteobacteria</taxon>
        <taxon>Enterobacterales</taxon>
        <taxon>Enterobacteriaceae</taxon>
        <taxon>Salmonella</taxon>
    </lineage>
</organism>
<evidence type="ECO:0000255" key="1">
    <source>
        <dbReference type="HAMAP-Rule" id="MF_01416"/>
    </source>
</evidence>
<protein>
    <recommendedName>
        <fullName evidence="1">ATP synthase subunit delta</fullName>
    </recommendedName>
    <alternativeName>
        <fullName evidence="1">ATP synthase F(1) sector subunit delta</fullName>
    </alternativeName>
    <alternativeName>
        <fullName evidence="1">F-type ATPase subunit delta</fullName>
        <shortName evidence="1">F-ATPase subunit delta</shortName>
    </alternativeName>
</protein>
<dbReference type="EMBL" id="AE014613">
    <property type="protein sequence ID" value="AAO71148.1"/>
    <property type="molecule type" value="Genomic_DNA"/>
</dbReference>
<dbReference type="EMBL" id="AL513382">
    <property type="protein sequence ID" value="CAD03127.1"/>
    <property type="molecule type" value="Genomic_DNA"/>
</dbReference>
<dbReference type="RefSeq" id="NP_458075.1">
    <property type="nucleotide sequence ID" value="NC_003198.1"/>
</dbReference>
<dbReference type="RefSeq" id="WP_001288957.1">
    <property type="nucleotide sequence ID" value="NZ_WSUR01000023.1"/>
</dbReference>
<dbReference type="SMR" id="Q8XFM9"/>
<dbReference type="STRING" id="220341.gene:17587770"/>
<dbReference type="KEGG" id="stt:t3651"/>
<dbReference type="KEGG" id="sty:STY3910"/>
<dbReference type="PATRIC" id="fig|220341.7.peg.3990"/>
<dbReference type="eggNOG" id="COG0712">
    <property type="taxonomic scope" value="Bacteria"/>
</dbReference>
<dbReference type="HOGENOM" id="CLU_085114_3_0_6"/>
<dbReference type="OMA" id="MVDNIQD"/>
<dbReference type="OrthoDB" id="9816221at2"/>
<dbReference type="Proteomes" id="UP000000541">
    <property type="component" value="Chromosome"/>
</dbReference>
<dbReference type="Proteomes" id="UP000002670">
    <property type="component" value="Chromosome"/>
</dbReference>
<dbReference type="GO" id="GO:0005886">
    <property type="term" value="C:plasma membrane"/>
    <property type="evidence" value="ECO:0007669"/>
    <property type="project" value="UniProtKB-SubCell"/>
</dbReference>
<dbReference type="GO" id="GO:0045259">
    <property type="term" value="C:proton-transporting ATP synthase complex"/>
    <property type="evidence" value="ECO:0007669"/>
    <property type="project" value="UniProtKB-KW"/>
</dbReference>
<dbReference type="GO" id="GO:0046933">
    <property type="term" value="F:proton-transporting ATP synthase activity, rotational mechanism"/>
    <property type="evidence" value="ECO:0007669"/>
    <property type="project" value="UniProtKB-UniRule"/>
</dbReference>
<dbReference type="FunFam" id="1.10.520.20:FF:000001">
    <property type="entry name" value="ATP synthase subunit delta"/>
    <property type="match status" value="1"/>
</dbReference>
<dbReference type="Gene3D" id="1.10.520.20">
    <property type="entry name" value="N-terminal domain of the delta subunit of the F1F0-ATP synthase"/>
    <property type="match status" value="1"/>
</dbReference>
<dbReference type="HAMAP" id="MF_01416">
    <property type="entry name" value="ATP_synth_delta_bact"/>
    <property type="match status" value="1"/>
</dbReference>
<dbReference type="InterPro" id="IPR026015">
    <property type="entry name" value="ATP_synth_OSCP/delta_N_sf"/>
</dbReference>
<dbReference type="InterPro" id="IPR020781">
    <property type="entry name" value="ATPase_OSCP/d_CS"/>
</dbReference>
<dbReference type="InterPro" id="IPR000711">
    <property type="entry name" value="ATPase_OSCP/dsu"/>
</dbReference>
<dbReference type="NCBIfam" id="TIGR01145">
    <property type="entry name" value="ATP_synt_delta"/>
    <property type="match status" value="1"/>
</dbReference>
<dbReference type="NCBIfam" id="NF004402">
    <property type="entry name" value="PRK05758.2-2"/>
    <property type="match status" value="1"/>
</dbReference>
<dbReference type="NCBIfam" id="NF004404">
    <property type="entry name" value="PRK05758.2-5"/>
    <property type="match status" value="1"/>
</dbReference>
<dbReference type="PANTHER" id="PTHR11910">
    <property type="entry name" value="ATP SYNTHASE DELTA CHAIN"/>
    <property type="match status" value="1"/>
</dbReference>
<dbReference type="Pfam" id="PF00213">
    <property type="entry name" value="OSCP"/>
    <property type="match status" value="1"/>
</dbReference>
<dbReference type="PRINTS" id="PR00125">
    <property type="entry name" value="ATPASEDELTA"/>
</dbReference>
<dbReference type="SUPFAM" id="SSF47928">
    <property type="entry name" value="N-terminal domain of the delta subunit of the F1F0-ATP synthase"/>
    <property type="match status" value="1"/>
</dbReference>
<dbReference type="PROSITE" id="PS00389">
    <property type="entry name" value="ATPASE_DELTA"/>
    <property type="match status" value="1"/>
</dbReference>
<proteinExistence type="inferred from homology"/>
<keyword id="KW-0066">ATP synthesis</keyword>
<keyword id="KW-0997">Cell inner membrane</keyword>
<keyword id="KW-1003">Cell membrane</keyword>
<keyword id="KW-0139">CF(1)</keyword>
<keyword id="KW-0375">Hydrogen ion transport</keyword>
<keyword id="KW-0406">Ion transport</keyword>
<keyword id="KW-0472">Membrane</keyword>
<keyword id="KW-0813">Transport</keyword>
<reference key="1">
    <citation type="journal article" date="2003" name="J. Bacteriol.">
        <title>Comparative genomics of Salmonella enterica serovar Typhi strains Ty2 and CT18.</title>
        <authorList>
            <person name="Deng W."/>
            <person name="Liou S.-R."/>
            <person name="Plunkett G. III"/>
            <person name="Mayhew G.F."/>
            <person name="Rose D.J."/>
            <person name="Burland V."/>
            <person name="Kodoyianni V."/>
            <person name="Schwartz D.C."/>
            <person name="Blattner F.R."/>
        </authorList>
    </citation>
    <scope>NUCLEOTIDE SEQUENCE [LARGE SCALE GENOMIC DNA]</scope>
    <source>
        <strain>ATCC 700931 / Ty2</strain>
    </source>
</reference>
<reference key="2">
    <citation type="journal article" date="2001" name="Nature">
        <title>Complete genome sequence of a multiple drug resistant Salmonella enterica serovar Typhi CT18.</title>
        <authorList>
            <person name="Parkhill J."/>
            <person name="Dougan G."/>
            <person name="James K.D."/>
            <person name="Thomson N.R."/>
            <person name="Pickard D."/>
            <person name="Wain J."/>
            <person name="Churcher C.M."/>
            <person name="Mungall K.L."/>
            <person name="Bentley S.D."/>
            <person name="Holden M.T.G."/>
            <person name="Sebaihia M."/>
            <person name="Baker S."/>
            <person name="Basham D."/>
            <person name="Brooks K."/>
            <person name="Chillingworth T."/>
            <person name="Connerton P."/>
            <person name="Cronin A."/>
            <person name="Davis P."/>
            <person name="Davies R.M."/>
            <person name="Dowd L."/>
            <person name="White N."/>
            <person name="Farrar J."/>
            <person name="Feltwell T."/>
            <person name="Hamlin N."/>
            <person name="Haque A."/>
            <person name="Hien T.T."/>
            <person name="Holroyd S."/>
            <person name="Jagels K."/>
            <person name="Krogh A."/>
            <person name="Larsen T.S."/>
            <person name="Leather S."/>
            <person name="Moule S."/>
            <person name="O'Gaora P."/>
            <person name="Parry C."/>
            <person name="Quail M.A."/>
            <person name="Rutherford K.M."/>
            <person name="Simmonds M."/>
            <person name="Skelton J."/>
            <person name="Stevens K."/>
            <person name="Whitehead S."/>
            <person name="Barrell B.G."/>
        </authorList>
    </citation>
    <scope>NUCLEOTIDE SEQUENCE [LARGE SCALE GENOMIC DNA]</scope>
    <source>
        <strain>CT18</strain>
    </source>
</reference>
<accession>Q8XFM9</accession>
<accession>Q7AM15</accession>
<feature type="chain" id="PRO_0000371123" description="ATP synthase subunit delta">
    <location>
        <begin position="1"/>
        <end position="177"/>
    </location>
</feature>
<name>ATPD_SALTI</name>
<gene>
    <name evidence="1" type="primary">atpH</name>
    <name type="ordered locus">STY3910</name>
    <name type="ordered locus">t3651</name>
</gene>
<sequence>MSEFVTVARPYAKAAFDFAVEHQSVERWQDMLAFAAEVTKNEQMAELLSGALAPETLAESFIAVCGEQLDENGQNLIRVMAENNRLNALPDVLEQFIHLRAASEATSEVEVTSATALSEEQLSKISAAMEKRLSRKVKLNCKIDKSVMAGVIIRAGDMVIDGSVRGRLERLADVLQS</sequence>